<keyword id="KW-0143">Chaperone</keyword>
<keyword id="KW-0963">Cytoplasm</keyword>
<keyword id="KW-1185">Reference proteome</keyword>
<keyword id="KW-0346">Stress response</keyword>
<feature type="chain" id="PRO_0000113878" description="Protein GrpE">
    <location>
        <begin position="1"/>
        <end position="207"/>
    </location>
</feature>
<feature type="region of interest" description="Disordered" evidence="2">
    <location>
        <begin position="1"/>
        <end position="31"/>
    </location>
</feature>
<accession>Q59984</accession>
<accession>Q31LG7</accession>
<reference key="1">
    <citation type="submission" date="2005-08" db="EMBL/GenBank/DDBJ databases">
        <title>Complete sequence of chromosome 1 of Synechococcus elongatus PCC 7942.</title>
        <authorList>
            <consortium name="US DOE Joint Genome Institute"/>
            <person name="Copeland A."/>
            <person name="Lucas S."/>
            <person name="Lapidus A."/>
            <person name="Barry K."/>
            <person name="Detter J.C."/>
            <person name="Glavina T."/>
            <person name="Hammon N."/>
            <person name="Israni S."/>
            <person name="Pitluck S."/>
            <person name="Schmutz J."/>
            <person name="Larimer F."/>
            <person name="Land M."/>
            <person name="Kyrpides N."/>
            <person name="Lykidis A."/>
            <person name="Golden S."/>
            <person name="Richardson P."/>
        </authorList>
    </citation>
    <scope>NUCLEOTIDE SEQUENCE [LARGE SCALE GENOMIC DNA]</scope>
    <source>
        <strain>ATCC 33912 / PCC 7942 / FACHB-805</strain>
    </source>
</reference>
<reference key="2">
    <citation type="journal article" date="1994" name="Biochem. Biophys. Res. Commun.">
        <title>Identification of dnaK multigene family in Synechococcus sp. PCC7942.</title>
        <authorList>
            <person name="Nimura K."/>
            <person name="Yoshikawa H."/>
            <person name="Takahashi H."/>
        </authorList>
    </citation>
    <scope>NUCLEOTIDE SEQUENCE [GENOMIC DNA] OF 11-207</scope>
</reference>
<sequence>MSEHQTPPEEDLTVANGDSAEAVSEPDVTVASGQEAAELAAQLALVAADRDRLKTELDEQNSAYLRLAADFENFRRRTLKEREELELQSKRTTITELLPVIDNFDRARAQIKPQGEEAEAIHKSYQGLYKQLVDCLKRIGVSPMRAEGQPFDPSLHDAVLREETTEHPDGIVLEELQRGYLLGDLVLRHALVKVSIAAEENSAAVTE</sequence>
<gene>
    <name evidence="1" type="primary">grpE</name>
    <name type="ordered locus">Synpcc7942_2072</name>
</gene>
<evidence type="ECO:0000255" key="1">
    <source>
        <dbReference type="HAMAP-Rule" id="MF_01151"/>
    </source>
</evidence>
<evidence type="ECO:0000256" key="2">
    <source>
        <dbReference type="SAM" id="MobiDB-lite"/>
    </source>
</evidence>
<name>GRPE_SYNE7</name>
<comment type="function">
    <text evidence="1">Participates actively in the response to hyperosmotic and heat shock by preventing the aggregation of stress-denatured proteins, in association with DnaK and GrpE. It is the nucleotide exchange factor for DnaK and may function as a thermosensor. Unfolded proteins bind initially to DnaJ; upon interaction with the DnaJ-bound protein, DnaK hydrolyzes its bound ATP, resulting in the formation of a stable complex. GrpE releases ADP from DnaK; ATP binding to DnaK triggers the release of the substrate protein, thus completing the reaction cycle. Several rounds of ATP-dependent interactions between DnaJ, DnaK and GrpE are required for fully efficient folding.</text>
</comment>
<comment type="subunit">
    <text evidence="1">Homodimer.</text>
</comment>
<comment type="subcellular location">
    <subcellularLocation>
        <location evidence="1">Cytoplasm</location>
    </subcellularLocation>
</comment>
<comment type="similarity">
    <text evidence="1">Belongs to the GrpE family.</text>
</comment>
<proteinExistence type="inferred from homology"/>
<dbReference type="EMBL" id="CP000100">
    <property type="protein sequence ID" value="ABB58102.1"/>
    <property type="molecule type" value="Genomic_DNA"/>
</dbReference>
<dbReference type="EMBL" id="D28550">
    <property type="protein sequence ID" value="BAA05902.1"/>
    <property type="molecule type" value="Genomic_DNA"/>
</dbReference>
<dbReference type="RefSeq" id="WP_011378302.1">
    <property type="nucleotide sequence ID" value="NZ_JACJTX010000001.1"/>
</dbReference>
<dbReference type="SMR" id="Q59984"/>
<dbReference type="STRING" id="1140.Synpcc7942_2072"/>
<dbReference type="PaxDb" id="1140-Synpcc7942_2072"/>
<dbReference type="GeneID" id="72430948"/>
<dbReference type="KEGG" id="syf:Synpcc7942_2072"/>
<dbReference type="eggNOG" id="COG0576">
    <property type="taxonomic scope" value="Bacteria"/>
</dbReference>
<dbReference type="HOGENOM" id="CLU_057217_5_1_3"/>
<dbReference type="OrthoDB" id="9812586at2"/>
<dbReference type="BioCyc" id="SYNEL:SYNPCC7942_2072-MONOMER"/>
<dbReference type="Proteomes" id="UP000889800">
    <property type="component" value="Chromosome"/>
</dbReference>
<dbReference type="GO" id="GO:0005737">
    <property type="term" value="C:cytoplasm"/>
    <property type="evidence" value="ECO:0007669"/>
    <property type="project" value="UniProtKB-SubCell"/>
</dbReference>
<dbReference type="GO" id="GO:0000774">
    <property type="term" value="F:adenyl-nucleotide exchange factor activity"/>
    <property type="evidence" value="ECO:0007669"/>
    <property type="project" value="InterPro"/>
</dbReference>
<dbReference type="GO" id="GO:0042803">
    <property type="term" value="F:protein homodimerization activity"/>
    <property type="evidence" value="ECO:0007669"/>
    <property type="project" value="InterPro"/>
</dbReference>
<dbReference type="GO" id="GO:0051087">
    <property type="term" value="F:protein-folding chaperone binding"/>
    <property type="evidence" value="ECO:0007669"/>
    <property type="project" value="InterPro"/>
</dbReference>
<dbReference type="GO" id="GO:0051082">
    <property type="term" value="F:unfolded protein binding"/>
    <property type="evidence" value="ECO:0007669"/>
    <property type="project" value="TreeGrafter"/>
</dbReference>
<dbReference type="GO" id="GO:0006457">
    <property type="term" value="P:protein folding"/>
    <property type="evidence" value="ECO:0007669"/>
    <property type="project" value="InterPro"/>
</dbReference>
<dbReference type="CDD" id="cd00446">
    <property type="entry name" value="GrpE"/>
    <property type="match status" value="1"/>
</dbReference>
<dbReference type="FunFam" id="2.30.22.10:FF:000001">
    <property type="entry name" value="Protein GrpE"/>
    <property type="match status" value="1"/>
</dbReference>
<dbReference type="Gene3D" id="3.90.20.20">
    <property type="match status" value="1"/>
</dbReference>
<dbReference type="Gene3D" id="2.30.22.10">
    <property type="entry name" value="Head domain of nucleotide exchange factor GrpE"/>
    <property type="match status" value="1"/>
</dbReference>
<dbReference type="HAMAP" id="MF_01151">
    <property type="entry name" value="GrpE"/>
    <property type="match status" value="1"/>
</dbReference>
<dbReference type="InterPro" id="IPR000740">
    <property type="entry name" value="GrpE"/>
</dbReference>
<dbReference type="InterPro" id="IPR013805">
    <property type="entry name" value="GrpE_coiled_coil"/>
</dbReference>
<dbReference type="InterPro" id="IPR009012">
    <property type="entry name" value="GrpE_head"/>
</dbReference>
<dbReference type="NCBIfam" id="NF010738">
    <property type="entry name" value="PRK14140.1"/>
    <property type="match status" value="1"/>
</dbReference>
<dbReference type="NCBIfam" id="NF010741">
    <property type="entry name" value="PRK14143.1"/>
    <property type="match status" value="1"/>
</dbReference>
<dbReference type="PANTHER" id="PTHR21237">
    <property type="entry name" value="GRPE PROTEIN"/>
    <property type="match status" value="1"/>
</dbReference>
<dbReference type="PANTHER" id="PTHR21237:SF23">
    <property type="entry name" value="GRPE PROTEIN HOMOLOG, MITOCHONDRIAL"/>
    <property type="match status" value="1"/>
</dbReference>
<dbReference type="Pfam" id="PF01025">
    <property type="entry name" value="GrpE"/>
    <property type="match status" value="1"/>
</dbReference>
<dbReference type="PRINTS" id="PR00773">
    <property type="entry name" value="GRPEPROTEIN"/>
</dbReference>
<dbReference type="SUPFAM" id="SSF58014">
    <property type="entry name" value="Coiled-coil domain of nucleotide exchange factor GrpE"/>
    <property type="match status" value="1"/>
</dbReference>
<dbReference type="SUPFAM" id="SSF51064">
    <property type="entry name" value="Head domain of nucleotide exchange factor GrpE"/>
    <property type="match status" value="1"/>
</dbReference>
<dbReference type="PROSITE" id="PS01071">
    <property type="entry name" value="GRPE"/>
    <property type="match status" value="1"/>
</dbReference>
<protein>
    <recommendedName>
        <fullName evidence="1">Protein GrpE</fullName>
    </recommendedName>
    <alternativeName>
        <fullName evidence="1">HSP-70 cofactor</fullName>
    </alternativeName>
</protein>
<organism>
    <name type="scientific">Synechococcus elongatus (strain ATCC 33912 / PCC 7942 / FACHB-805)</name>
    <name type="common">Anacystis nidulans R2</name>
    <dbReference type="NCBI Taxonomy" id="1140"/>
    <lineage>
        <taxon>Bacteria</taxon>
        <taxon>Bacillati</taxon>
        <taxon>Cyanobacteriota</taxon>
        <taxon>Cyanophyceae</taxon>
        <taxon>Synechococcales</taxon>
        <taxon>Synechococcaceae</taxon>
        <taxon>Synechococcus</taxon>
    </lineage>
</organism>